<feature type="chain" id="PRO_0000146062" description="Phosphoglycerate kinase">
    <location>
        <begin position="1"/>
        <end position="411"/>
    </location>
</feature>
<feature type="binding site" evidence="1">
    <location>
        <begin position="28"/>
        <end position="30"/>
    </location>
    <ligand>
        <name>substrate</name>
    </ligand>
</feature>
<feature type="binding site" evidence="1">
    <location>
        <position position="45"/>
    </location>
    <ligand>
        <name>substrate</name>
    </ligand>
</feature>
<feature type="binding site" evidence="1">
    <location>
        <begin position="68"/>
        <end position="71"/>
    </location>
    <ligand>
        <name>substrate</name>
    </ligand>
</feature>
<feature type="binding site" evidence="1">
    <location>
        <position position="125"/>
    </location>
    <ligand>
        <name>substrate</name>
    </ligand>
</feature>
<feature type="binding site" evidence="1">
    <location>
        <position position="165"/>
    </location>
    <ligand>
        <name>substrate</name>
    </ligand>
</feature>
<feature type="binding site" evidence="1">
    <location>
        <position position="338"/>
    </location>
    <ligand>
        <name>ATP</name>
        <dbReference type="ChEBI" id="CHEBI:30616"/>
    </ligand>
</feature>
<feature type="binding site" evidence="1">
    <location>
        <begin position="364"/>
        <end position="367"/>
    </location>
    <ligand>
        <name>ATP</name>
        <dbReference type="ChEBI" id="CHEBI:30616"/>
    </ligand>
</feature>
<gene>
    <name type="primary">pgk</name>
    <name type="ordered locus">MTH_1042</name>
</gene>
<comment type="catalytic activity">
    <reaction>
        <text>(2R)-3-phosphoglycerate + ATP = (2R)-3-phospho-glyceroyl phosphate + ADP</text>
        <dbReference type="Rhea" id="RHEA:14801"/>
        <dbReference type="ChEBI" id="CHEBI:30616"/>
        <dbReference type="ChEBI" id="CHEBI:57604"/>
        <dbReference type="ChEBI" id="CHEBI:58272"/>
        <dbReference type="ChEBI" id="CHEBI:456216"/>
        <dbReference type="EC" id="2.7.2.3"/>
    </reaction>
</comment>
<comment type="pathway">
    <text>Carbohydrate degradation; glycolysis; pyruvate from D-glyceraldehyde 3-phosphate: step 2/5.</text>
</comment>
<comment type="subunit">
    <text evidence="1">Homodimer.</text>
</comment>
<comment type="subcellular location">
    <subcellularLocation>
        <location evidence="2">Cytoplasm</location>
    </subcellularLocation>
</comment>
<comment type="similarity">
    <text evidence="2">Belongs to the phosphoglycerate kinase family.</text>
</comment>
<protein>
    <recommendedName>
        <fullName>Phosphoglycerate kinase</fullName>
        <ecNumber>2.7.2.3</ecNumber>
    </recommendedName>
</protein>
<reference key="1">
    <citation type="journal article" date="1997" name="J. Bacteriol.">
        <title>Complete genome sequence of Methanobacterium thermoautotrophicum deltaH: functional analysis and comparative genomics.</title>
        <authorList>
            <person name="Smith D.R."/>
            <person name="Doucette-Stamm L.A."/>
            <person name="Deloughery C."/>
            <person name="Lee H.-M."/>
            <person name="Dubois J."/>
            <person name="Aldredge T."/>
            <person name="Bashirzadeh R."/>
            <person name="Blakely D."/>
            <person name="Cook R."/>
            <person name="Gilbert K."/>
            <person name="Harrison D."/>
            <person name="Hoang L."/>
            <person name="Keagle P."/>
            <person name="Lumm W."/>
            <person name="Pothier B."/>
            <person name="Qiu D."/>
            <person name="Spadafora R."/>
            <person name="Vicare R."/>
            <person name="Wang Y."/>
            <person name="Wierzbowski J."/>
            <person name="Gibson R."/>
            <person name="Jiwani N."/>
            <person name="Caruso A."/>
            <person name="Bush D."/>
            <person name="Safer H."/>
            <person name="Patwell D."/>
            <person name="Prabhakar S."/>
            <person name="McDougall S."/>
            <person name="Shimer G."/>
            <person name="Goyal A."/>
            <person name="Pietrovski S."/>
            <person name="Church G.M."/>
            <person name="Daniels C.J."/>
            <person name="Mao J.-I."/>
            <person name="Rice P."/>
            <person name="Noelling J."/>
            <person name="Reeve J.N."/>
        </authorList>
    </citation>
    <scope>NUCLEOTIDE SEQUENCE [LARGE SCALE GENOMIC DNA]</scope>
    <source>
        <strain>ATCC 29096 / DSM 1053 / JCM 10044 / NBRC 100330 / Delta H</strain>
    </source>
</reference>
<accession>O27121</accession>
<dbReference type="EC" id="2.7.2.3"/>
<dbReference type="EMBL" id="AE000666">
    <property type="protein sequence ID" value="AAB85538.1"/>
    <property type="molecule type" value="Genomic_DNA"/>
</dbReference>
<dbReference type="PIR" id="B69006">
    <property type="entry name" value="B69006"/>
</dbReference>
<dbReference type="SMR" id="O27121"/>
<dbReference type="FunCoup" id="O27121">
    <property type="interactions" value="185"/>
</dbReference>
<dbReference type="STRING" id="187420.MTH_1042"/>
<dbReference type="PaxDb" id="187420-MTH_1042"/>
<dbReference type="EnsemblBacteria" id="AAB85538">
    <property type="protein sequence ID" value="AAB85538"/>
    <property type="gene ID" value="MTH_1042"/>
</dbReference>
<dbReference type="KEGG" id="mth:MTH_1042"/>
<dbReference type="PATRIC" id="fig|187420.15.peg.1026"/>
<dbReference type="HOGENOM" id="CLU_025427_0_2_2"/>
<dbReference type="InParanoid" id="O27121"/>
<dbReference type="UniPathway" id="UPA00109">
    <property type="reaction ID" value="UER00185"/>
</dbReference>
<dbReference type="Proteomes" id="UP000005223">
    <property type="component" value="Chromosome"/>
</dbReference>
<dbReference type="GO" id="GO:0005829">
    <property type="term" value="C:cytosol"/>
    <property type="evidence" value="ECO:0007669"/>
    <property type="project" value="TreeGrafter"/>
</dbReference>
<dbReference type="GO" id="GO:0043531">
    <property type="term" value="F:ADP binding"/>
    <property type="evidence" value="ECO:0007669"/>
    <property type="project" value="TreeGrafter"/>
</dbReference>
<dbReference type="GO" id="GO:0005524">
    <property type="term" value="F:ATP binding"/>
    <property type="evidence" value="ECO:0007669"/>
    <property type="project" value="UniProtKB-KW"/>
</dbReference>
<dbReference type="GO" id="GO:0004618">
    <property type="term" value="F:phosphoglycerate kinase activity"/>
    <property type="evidence" value="ECO:0007669"/>
    <property type="project" value="UniProtKB-UniRule"/>
</dbReference>
<dbReference type="GO" id="GO:0006094">
    <property type="term" value="P:gluconeogenesis"/>
    <property type="evidence" value="ECO:0007669"/>
    <property type="project" value="TreeGrafter"/>
</dbReference>
<dbReference type="GO" id="GO:0006096">
    <property type="term" value="P:glycolytic process"/>
    <property type="evidence" value="ECO:0007669"/>
    <property type="project" value="UniProtKB-UniRule"/>
</dbReference>
<dbReference type="FunFam" id="3.40.50.1260:FF:000006">
    <property type="entry name" value="Phosphoglycerate kinase"/>
    <property type="match status" value="1"/>
</dbReference>
<dbReference type="FunFam" id="3.40.50.1260:FF:000012">
    <property type="entry name" value="Phosphoglycerate kinase"/>
    <property type="match status" value="1"/>
</dbReference>
<dbReference type="Gene3D" id="3.40.50.1260">
    <property type="entry name" value="Phosphoglycerate kinase, N-terminal domain"/>
    <property type="match status" value="2"/>
</dbReference>
<dbReference type="HAMAP" id="MF_00145">
    <property type="entry name" value="Phosphoglyc_kinase"/>
    <property type="match status" value="1"/>
</dbReference>
<dbReference type="InterPro" id="IPR001576">
    <property type="entry name" value="Phosphoglycerate_kinase"/>
</dbReference>
<dbReference type="InterPro" id="IPR015911">
    <property type="entry name" value="Phosphoglycerate_kinase_CS"/>
</dbReference>
<dbReference type="InterPro" id="IPR015824">
    <property type="entry name" value="Phosphoglycerate_kinase_N"/>
</dbReference>
<dbReference type="InterPro" id="IPR036043">
    <property type="entry name" value="Phosphoglycerate_kinase_sf"/>
</dbReference>
<dbReference type="PANTHER" id="PTHR11406">
    <property type="entry name" value="PHOSPHOGLYCERATE KINASE"/>
    <property type="match status" value="1"/>
</dbReference>
<dbReference type="PANTHER" id="PTHR11406:SF23">
    <property type="entry name" value="PHOSPHOGLYCERATE KINASE 1, CHLOROPLASTIC-RELATED"/>
    <property type="match status" value="1"/>
</dbReference>
<dbReference type="Pfam" id="PF00162">
    <property type="entry name" value="PGK"/>
    <property type="match status" value="1"/>
</dbReference>
<dbReference type="PIRSF" id="PIRSF000724">
    <property type="entry name" value="Pgk"/>
    <property type="match status" value="1"/>
</dbReference>
<dbReference type="PRINTS" id="PR00477">
    <property type="entry name" value="PHGLYCKINASE"/>
</dbReference>
<dbReference type="SUPFAM" id="SSF53748">
    <property type="entry name" value="Phosphoglycerate kinase"/>
    <property type="match status" value="1"/>
</dbReference>
<dbReference type="PROSITE" id="PS00111">
    <property type="entry name" value="PGLYCERATE_KINASE"/>
    <property type="match status" value="1"/>
</dbReference>
<organism>
    <name type="scientific">Methanothermobacter thermautotrophicus (strain ATCC 29096 / DSM 1053 / JCM 10044 / NBRC 100330 / Delta H)</name>
    <name type="common">Methanobacterium thermoautotrophicum</name>
    <dbReference type="NCBI Taxonomy" id="187420"/>
    <lineage>
        <taxon>Archaea</taxon>
        <taxon>Methanobacteriati</taxon>
        <taxon>Methanobacteriota</taxon>
        <taxon>Methanomada group</taxon>
        <taxon>Methanobacteria</taxon>
        <taxon>Methanobacteriales</taxon>
        <taxon>Methanobacteriaceae</taxon>
        <taxon>Methanothermobacter</taxon>
    </lineage>
</organism>
<keyword id="KW-0067">ATP-binding</keyword>
<keyword id="KW-0963">Cytoplasm</keyword>
<keyword id="KW-0324">Glycolysis</keyword>
<keyword id="KW-0418">Kinase</keyword>
<keyword id="KW-0547">Nucleotide-binding</keyword>
<keyword id="KW-1185">Reference proteome</keyword>
<keyword id="KW-0808">Transferase</keyword>
<name>PGK_METTH</name>
<evidence type="ECO:0000250" key="1"/>
<evidence type="ECO:0000305" key="2"/>
<sequence>MMVIPVSFKFKTMDDIEVTGKTVLVRVDINSPVDPNDGTILDDTRMRLHAETIRELSDRGARTVVMAHQSRPGKNDFTTLEQHARALSGILRRPVKYVEDIFGSAARENISGLGDGEIILLENVRFYSEEVLKRDPEEQAETHLVRKLAPLLDYFINDAFAAAHRSQPSLVGFALRVPSAAGRVMERELRTLQGALENVERPCVYVLGGVKVDDSIMVMKNVLENGSADLVLTTGLVANIFLAGCGVKIGKVNMDFIKSRGYCDFIKVAKKLKKRFPERIVVPVDVAVCRDGKRVDVPVKKIPNHPIQDIGMETIKLYARRIREARTLFANGPAGVFENPDFSIGTEDILNAISSSEGFSIIGGGHLAAAAVKMGFEDSINHISSGGGASISLLAGEELPAVRVLEESRHP</sequence>
<proteinExistence type="inferred from homology"/>